<organism>
    <name type="scientific">Rhodospirillum rubrum (strain ATCC 11170 / ATH 1.1.1 / DSM 467 / LMG 4362 / NCIMB 8255 / S1)</name>
    <dbReference type="NCBI Taxonomy" id="269796"/>
    <lineage>
        <taxon>Bacteria</taxon>
        <taxon>Pseudomonadati</taxon>
        <taxon>Pseudomonadota</taxon>
        <taxon>Alphaproteobacteria</taxon>
        <taxon>Rhodospirillales</taxon>
        <taxon>Rhodospirillaceae</taxon>
        <taxon>Rhodospirillum</taxon>
    </lineage>
</organism>
<accession>Q2RYA4</accession>
<reference key="1">
    <citation type="journal article" date="2011" name="Stand. Genomic Sci.">
        <title>Complete genome sequence of Rhodospirillum rubrum type strain (S1).</title>
        <authorList>
            <person name="Munk A.C."/>
            <person name="Copeland A."/>
            <person name="Lucas S."/>
            <person name="Lapidus A."/>
            <person name="Del Rio T.G."/>
            <person name="Barry K."/>
            <person name="Detter J.C."/>
            <person name="Hammon N."/>
            <person name="Israni S."/>
            <person name="Pitluck S."/>
            <person name="Brettin T."/>
            <person name="Bruce D."/>
            <person name="Han C."/>
            <person name="Tapia R."/>
            <person name="Gilna P."/>
            <person name="Schmutz J."/>
            <person name="Larimer F."/>
            <person name="Land M."/>
            <person name="Kyrpides N.C."/>
            <person name="Mavromatis K."/>
            <person name="Richardson P."/>
            <person name="Rohde M."/>
            <person name="Goeker M."/>
            <person name="Klenk H.P."/>
            <person name="Zhang Y."/>
            <person name="Roberts G.P."/>
            <person name="Reslewic S."/>
            <person name="Schwartz D.C."/>
        </authorList>
    </citation>
    <scope>NUCLEOTIDE SEQUENCE [LARGE SCALE GENOMIC DNA]</scope>
    <source>
        <strain>ATCC 11170 / ATH 1.1.1 / DSM 467 / LMG 4362 / NCIMB 8255 / S1</strain>
    </source>
</reference>
<name>Y086_RHORT</name>
<feature type="chain" id="PRO_0000241828" description="UPF0178 protein Rru_A0086">
    <location>
        <begin position="1"/>
        <end position="150"/>
    </location>
</feature>
<evidence type="ECO:0000255" key="1">
    <source>
        <dbReference type="HAMAP-Rule" id="MF_00489"/>
    </source>
</evidence>
<dbReference type="EMBL" id="CP000230">
    <property type="protein sequence ID" value="ABC20891.1"/>
    <property type="molecule type" value="Genomic_DNA"/>
</dbReference>
<dbReference type="RefSeq" id="WP_011387847.1">
    <property type="nucleotide sequence ID" value="NC_007643.1"/>
</dbReference>
<dbReference type="RefSeq" id="YP_425178.1">
    <property type="nucleotide sequence ID" value="NC_007643.1"/>
</dbReference>
<dbReference type="SMR" id="Q2RYA4"/>
<dbReference type="STRING" id="269796.Rru_A0086"/>
<dbReference type="EnsemblBacteria" id="ABC20891">
    <property type="protein sequence ID" value="ABC20891"/>
    <property type="gene ID" value="Rru_A0086"/>
</dbReference>
<dbReference type="KEGG" id="rru:Rru_A0086"/>
<dbReference type="PATRIC" id="fig|269796.9.peg.139"/>
<dbReference type="eggNOG" id="COG1671">
    <property type="taxonomic scope" value="Bacteria"/>
</dbReference>
<dbReference type="HOGENOM" id="CLU_106619_2_1_5"/>
<dbReference type="PhylomeDB" id="Q2RYA4"/>
<dbReference type="Proteomes" id="UP000001929">
    <property type="component" value="Chromosome"/>
</dbReference>
<dbReference type="HAMAP" id="MF_00489">
    <property type="entry name" value="UPF0178"/>
    <property type="match status" value="1"/>
</dbReference>
<dbReference type="InterPro" id="IPR003791">
    <property type="entry name" value="UPF0178"/>
</dbReference>
<dbReference type="NCBIfam" id="NF001095">
    <property type="entry name" value="PRK00124.1"/>
    <property type="match status" value="1"/>
</dbReference>
<dbReference type="PANTHER" id="PTHR35146">
    <property type="entry name" value="UPF0178 PROTEIN YAII"/>
    <property type="match status" value="1"/>
</dbReference>
<dbReference type="PANTHER" id="PTHR35146:SF1">
    <property type="entry name" value="UPF0178 PROTEIN YAII"/>
    <property type="match status" value="1"/>
</dbReference>
<dbReference type="Pfam" id="PF02639">
    <property type="entry name" value="DUF188"/>
    <property type="match status" value="1"/>
</dbReference>
<keyword id="KW-1185">Reference proteome</keyword>
<sequence>MEVFIDADACPVRTEAFKVAERHRLIVHVVGNAPVPVPHNDPRVRRVIVPTTPDAADDWIAEHIGEGDICITADIPLAARCLKKGAKAIGTTGKAFTEDSIGMALSMRDLMRDLREAGAVSGGPASFAPKDRSRFLQALEEAIQAVKRGR</sequence>
<comment type="similarity">
    <text evidence="1">Belongs to the UPF0178 family.</text>
</comment>
<proteinExistence type="inferred from homology"/>
<gene>
    <name type="ordered locus">Rru_A0086</name>
</gene>
<protein>
    <recommendedName>
        <fullName evidence="1">UPF0178 protein Rru_A0086</fullName>
    </recommendedName>
</protein>